<gene>
    <name evidence="1" type="primary">argS</name>
    <name type="ordered locus">RT0067</name>
</gene>
<keyword id="KW-0030">Aminoacyl-tRNA synthetase</keyword>
<keyword id="KW-0067">ATP-binding</keyword>
<keyword id="KW-0963">Cytoplasm</keyword>
<keyword id="KW-0436">Ligase</keyword>
<keyword id="KW-0547">Nucleotide-binding</keyword>
<keyword id="KW-0648">Protein biosynthesis</keyword>
<dbReference type="EC" id="6.1.1.19" evidence="1"/>
<dbReference type="EMBL" id="AE017197">
    <property type="protein sequence ID" value="AAU03553.1"/>
    <property type="molecule type" value="Genomic_DNA"/>
</dbReference>
<dbReference type="RefSeq" id="WP_011190540.1">
    <property type="nucleotide sequence ID" value="NC_006142.1"/>
</dbReference>
<dbReference type="SMR" id="Q68XT9"/>
<dbReference type="KEGG" id="rty:RT0067"/>
<dbReference type="eggNOG" id="COG0018">
    <property type="taxonomic scope" value="Bacteria"/>
</dbReference>
<dbReference type="HOGENOM" id="CLU_006406_0_1_5"/>
<dbReference type="OrthoDB" id="9803211at2"/>
<dbReference type="Proteomes" id="UP000000604">
    <property type="component" value="Chromosome"/>
</dbReference>
<dbReference type="GO" id="GO:0005737">
    <property type="term" value="C:cytoplasm"/>
    <property type="evidence" value="ECO:0007669"/>
    <property type="project" value="UniProtKB-SubCell"/>
</dbReference>
<dbReference type="GO" id="GO:0004814">
    <property type="term" value="F:arginine-tRNA ligase activity"/>
    <property type="evidence" value="ECO:0007669"/>
    <property type="project" value="UniProtKB-UniRule"/>
</dbReference>
<dbReference type="GO" id="GO:0005524">
    <property type="term" value="F:ATP binding"/>
    <property type="evidence" value="ECO:0007669"/>
    <property type="project" value="UniProtKB-UniRule"/>
</dbReference>
<dbReference type="GO" id="GO:0006420">
    <property type="term" value="P:arginyl-tRNA aminoacylation"/>
    <property type="evidence" value="ECO:0007669"/>
    <property type="project" value="UniProtKB-UniRule"/>
</dbReference>
<dbReference type="CDD" id="cd00671">
    <property type="entry name" value="ArgRS_core"/>
    <property type="match status" value="1"/>
</dbReference>
<dbReference type="Gene3D" id="3.30.1360.70">
    <property type="entry name" value="Arginyl tRNA synthetase N-terminal domain"/>
    <property type="match status" value="1"/>
</dbReference>
<dbReference type="Gene3D" id="3.40.50.620">
    <property type="entry name" value="HUPs"/>
    <property type="match status" value="1"/>
</dbReference>
<dbReference type="Gene3D" id="1.10.730.10">
    <property type="entry name" value="Isoleucyl-tRNA Synthetase, Domain 1"/>
    <property type="match status" value="1"/>
</dbReference>
<dbReference type="HAMAP" id="MF_00123">
    <property type="entry name" value="Arg_tRNA_synth"/>
    <property type="match status" value="1"/>
</dbReference>
<dbReference type="InterPro" id="IPR001412">
    <property type="entry name" value="aa-tRNA-synth_I_CS"/>
</dbReference>
<dbReference type="InterPro" id="IPR001278">
    <property type="entry name" value="Arg-tRNA-ligase"/>
</dbReference>
<dbReference type="InterPro" id="IPR005148">
    <property type="entry name" value="Arg-tRNA-synth_N"/>
</dbReference>
<dbReference type="InterPro" id="IPR036695">
    <property type="entry name" value="Arg-tRNA-synth_N_sf"/>
</dbReference>
<dbReference type="InterPro" id="IPR035684">
    <property type="entry name" value="ArgRS_core"/>
</dbReference>
<dbReference type="InterPro" id="IPR008909">
    <property type="entry name" value="DALR_anticod-bd"/>
</dbReference>
<dbReference type="InterPro" id="IPR014729">
    <property type="entry name" value="Rossmann-like_a/b/a_fold"/>
</dbReference>
<dbReference type="InterPro" id="IPR009080">
    <property type="entry name" value="tRNAsynth_Ia_anticodon-bd"/>
</dbReference>
<dbReference type="NCBIfam" id="TIGR00456">
    <property type="entry name" value="argS"/>
    <property type="match status" value="1"/>
</dbReference>
<dbReference type="PANTHER" id="PTHR11956:SF5">
    <property type="entry name" value="ARGININE--TRNA LIGASE, CYTOPLASMIC"/>
    <property type="match status" value="1"/>
</dbReference>
<dbReference type="PANTHER" id="PTHR11956">
    <property type="entry name" value="ARGINYL-TRNA SYNTHETASE"/>
    <property type="match status" value="1"/>
</dbReference>
<dbReference type="Pfam" id="PF03485">
    <property type="entry name" value="Arg_tRNA_synt_N"/>
    <property type="match status" value="1"/>
</dbReference>
<dbReference type="Pfam" id="PF05746">
    <property type="entry name" value="DALR_1"/>
    <property type="match status" value="1"/>
</dbReference>
<dbReference type="Pfam" id="PF00750">
    <property type="entry name" value="tRNA-synt_1d"/>
    <property type="match status" value="1"/>
</dbReference>
<dbReference type="PRINTS" id="PR01038">
    <property type="entry name" value="TRNASYNTHARG"/>
</dbReference>
<dbReference type="SMART" id="SM01016">
    <property type="entry name" value="Arg_tRNA_synt_N"/>
    <property type="match status" value="1"/>
</dbReference>
<dbReference type="SMART" id="SM00836">
    <property type="entry name" value="DALR_1"/>
    <property type="match status" value="1"/>
</dbReference>
<dbReference type="SUPFAM" id="SSF47323">
    <property type="entry name" value="Anticodon-binding domain of a subclass of class I aminoacyl-tRNA synthetases"/>
    <property type="match status" value="1"/>
</dbReference>
<dbReference type="SUPFAM" id="SSF55190">
    <property type="entry name" value="Arginyl-tRNA synthetase (ArgRS), N-terminal 'additional' domain"/>
    <property type="match status" value="1"/>
</dbReference>
<dbReference type="SUPFAM" id="SSF52374">
    <property type="entry name" value="Nucleotidylyl transferase"/>
    <property type="match status" value="1"/>
</dbReference>
<dbReference type="PROSITE" id="PS00178">
    <property type="entry name" value="AA_TRNA_LIGASE_I"/>
    <property type="match status" value="1"/>
</dbReference>
<name>SYR_RICTY</name>
<protein>
    <recommendedName>
        <fullName evidence="1">Arginine--tRNA ligase</fullName>
        <ecNumber evidence="1">6.1.1.19</ecNumber>
    </recommendedName>
    <alternativeName>
        <fullName evidence="1">Arginyl-tRNA synthetase</fullName>
        <shortName evidence="1">ArgRS</shortName>
    </alternativeName>
</protein>
<reference key="1">
    <citation type="journal article" date="2004" name="J. Bacteriol.">
        <title>Complete genome sequence of Rickettsia typhi and comparison with sequences of other Rickettsiae.</title>
        <authorList>
            <person name="McLeod M.P."/>
            <person name="Qin X."/>
            <person name="Karpathy S.E."/>
            <person name="Gioia J."/>
            <person name="Highlander S.K."/>
            <person name="Fox G.E."/>
            <person name="McNeill T.Z."/>
            <person name="Jiang H."/>
            <person name="Muzny D."/>
            <person name="Jacob L.S."/>
            <person name="Hawes A.C."/>
            <person name="Sodergren E."/>
            <person name="Gill R."/>
            <person name="Hume J."/>
            <person name="Morgan M."/>
            <person name="Fan G."/>
            <person name="Amin A.G."/>
            <person name="Gibbs R.A."/>
            <person name="Hong C."/>
            <person name="Yu X.-J."/>
            <person name="Walker D.H."/>
            <person name="Weinstock G.M."/>
        </authorList>
    </citation>
    <scope>NUCLEOTIDE SEQUENCE [LARGE SCALE GENOMIC DNA]</scope>
    <source>
        <strain>ATCC VR-144 / Wilmington</strain>
    </source>
</reference>
<proteinExistence type="inferred from homology"/>
<evidence type="ECO:0000255" key="1">
    <source>
        <dbReference type="HAMAP-Rule" id="MF_00123"/>
    </source>
</evidence>
<feature type="chain" id="PRO_0000242085" description="Arginine--tRNA ligase">
    <location>
        <begin position="1"/>
        <end position="576"/>
    </location>
</feature>
<feature type="short sequence motif" description="'HIGH' region">
    <location>
        <begin position="126"/>
        <end position="136"/>
    </location>
</feature>
<organism>
    <name type="scientific">Rickettsia typhi (strain ATCC VR-144 / Wilmington)</name>
    <dbReference type="NCBI Taxonomy" id="257363"/>
    <lineage>
        <taxon>Bacteria</taxon>
        <taxon>Pseudomonadati</taxon>
        <taxon>Pseudomonadota</taxon>
        <taxon>Alphaproteobacteria</taxon>
        <taxon>Rickettsiales</taxon>
        <taxon>Rickettsiaceae</taxon>
        <taxon>Rickettsieae</taxon>
        <taxon>Rickettsia</taxon>
        <taxon>typhus group</taxon>
    </lineage>
</organism>
<accession>Q68XT9</accession>
<comment type="catalytic activity">
    <reaction evidence="1">
        <text>tRNA(Arg) + L-arginine + ATP = L-arginyl-tRNA(Arg) + AMP + diphosphate</text>
        <dbReference type="Rhea" id="RHEA:20301"/>
        <dbReference type="Rhea" id="RHEA-COMP:9658"/>
        <dbReference type="Rhea" id="RHEA-COMP:9673"/>
        <dbReference type="ChEBI" id="CHEBI:30616"/>
        <dbReference type="ChEBI" id="CHEBI:32682"/>
        <dbReference type="ChEBI" id="CHEBI:33019"/>
        <dbReference type="ChEBI" id="CHEBI:78442"/>
        <dbReference type="ChEBI" id="CHEBI:78513"/>
        <dbReference type="ChEBI" id="CHEBI:456215"/>
        <dbReference type="EC" id="6.1.1.19"/>
    </reaction>
</comment>
<comment type="subunit">
    <text evidence="1">Monomer.</text>
</comment>
<comment type="subcellular location">
    <subcellularLocation>
        <location evidence="1">Cytoplasm</location>
    </subcellularLocation>
</comment>
<comment type="similarity">
    <text evidence="1">Belongs to the class-I aminoacyl-tRNA synthetase family.</text>
</comment>
<sequence length="576" mass="65090">MNIFNQLKQDIIAASQQLYNNQEIANTATIETPKDSFNGDLSSNIAMIIASKESIAPREVALKFKEVLVTLPYIASIEIAGPGFINFTIKAESWQAAIKDILQHEEKFFEIDIDKNSNINIEYVSANPTGPMHIGHARGAVYGDVLARILQKVGYSVTKEYYVNDAGSQINDLVSTVLLRYKEALGEQITIPIGLYPGEYLIPLGEILSKEYGNKLLTMNDVERFKIIKSLAVEKMLDLNRKDLADLGIKHDIFFSEQSLYDKGEIEKTVKLLESMGLIYEGTLPAPKGKVHEDWKHKVQKLFKSTNYGDSQDRPIEKADGSWSYFASDLAYAKDKIDRGANHLIYVLGADHSGYVKRIEAIVKALGQEKVKVDVKICQLVNFVENGVPVKMSKRLGSFASVQDVNKKVGKDIIRFMMLTRQNDKPLDFDLVKVKEQSRENPIFYVQYAHVRTKSILSKARELMPEAYNSFKEGKYNLSLLSTEEEIEIIKLLAAWTKTLEASVKYFEPHRIAFYLINLASKFHSMWNFGKENSDYRFIIENNQELTLARLALASVIQKVIASGLEVIGVEPMVTM</sequence>